<feature type="chain" id="PRO_0000112037" description="ATP-dependent 6-phosphofructokinase 2">
    <location>
        <begin position="1"/>
        <end position="775"/>
    </location>
</feature>
<feature type="region of interest" description="N-terminal catalytic PFK domain 1">
    <location>
        <begin position="1"/>
        <end position="390"/>
    </location>
</feature>
<feature type="region of interest" description="Interdomain linker">
    <location>
        <begin position="391"/>
        <end position="404"/>
    </location>
</feature>
<feature type="region of interest" description="C-terminal regulatory PFK domain 2">
    <location>
        <begin position="405"/>
        <end position="775"/>
    </location>
</feature>
<feature type="active site" description="Proton acceptor" evidence="1">
    <location>
        <position position="166"/>
    </location>
</feature>
<feature type="binding site" evidence="1">
    <location>
        <position position="25"/>
    </location>
    <ligand>
        <name>ATP</name>
        <dbReference type="ChEBI" id="CHEBI:30616"/>
    </ligand>
</feature>
<feature type="binding site" evidence="1">
    <location>
        <begin position="88"/>
        <end position="89"/>
    </location>
    <ligand>
        <name>ATP</name>
        <dbReference type="ChEBI" id="CHEBI:30616"/>
    </ligand>
</feature>
<feature type="binding site" evidence="1">
    <location>
        <begin position="118"/>
        <end position="121"/>
    </location>
    <ligand>
        <name>ATP</name>
        <dbReference type="ChEBI" id="CHEBI:30616"/>
    </ligand>
</feature>
<feature type="binding site" evidence="1">
    <location>
        <position position="119"/>
    </location>
    <ligand>
        <name>Mg(2+)</name>
        <dbReference type="ChEBI" id="CHEBI:18420"/>
        <note>catalytic</note>
    </ligand>
</feature>
<feature type="binding site" description="in other chain" evidence="1">
    <location>
        <begin position="164"/>
        <end position="166"/>
    </location>
    <ligand>
        <name>substrate</name>
        <note>ligand shared between dimeric partners</note>
    </ligand>
</feature>
<feature type="binding site" evidence="1">
    <location>
        <position position="201"/>
    </location>
    <ligand>
        <name>substrate</name>
        <note>ligand shared between dimeric partners</note>
    </ligand>
</feature>
<feature type="binding site" description="in other chain" evidence="1">
    <location>
        <begin position="208"/>
        <end position="210"/>
    </location>
    <ligand>
        <name>substrate</name>
        <note>ligand shared between dimeric partners</note>
    </ligand>
</feature>
<feature type="binding site" description="in other chain" evidence="1">
    <location>
        <position position="264"/>
    </location>
    <ligand>
        <name>substrate</name>
        <note>ligand shared between dimeric partners</note>
    </ligand>
</feature>
<feature type="binding site" evidence="1">
    <location>
        <position position="292"/>
    </location>
    <ligand>
        <name>substrate</name>
        <note>ligand shared between dimeric partners</note>
    </ligand>
</feature>
<feature type="binding site" description="in other chain" evidence="1">
    <location>
        <begin position="298"/>
        <end position="301"/>
    </location>
    <ligand>
        <name>substrate</name>
        <note>ligand shared between dimeric partners</note>
    </ligand>
</feature>
<feature type="binding site" evidence="1">
    <location>
        <begin position="537"/>
        <end position="541"/>
    </location>
    <ligand>
        <name>beta-D-fructose 2,6-bisphosphate</name>
        <dbReference type="ChEBI" id="CHEBI:58579"/>
        <note>allosteric activator</note>
    </ligand>
</feature>
<feature type="binding site" evidence="1">
    <location>
        <begin position="582"/>
        <end position="584"/>
    </location>
    <ligand>
        <name>beta-D-fructose 2,6-bisphosphate</name>
        <dbReference type="ChEBI" id="CHEBI:58579"/>
        <note>allosteric activator</note>
    </ligand>
</feature>
<feature type="binding site" evidence="1">
    <location>
        <position position="640"/>
    </location>
    <ligand>
        <name>beta-D-fructose 2,6-bisphosphate</name>
        <dbReference type="ChEBI" id="CHEBI:58579"/>
        <note>allosteric activator</note>
    </ligand>
</feature>
<feature type="binding site" evidence="1">
    <location>
        <begin position="672"/>
        <end position="675"/>
    </location>
    <ligand>
        <name>beta-D-fructose 2,6-bisphosphate</name>
        <dbReference type="ChEBI" id="CHEBI:58579"/>
        <note>allosteric activator</note>
    </ligand>
</feature>
<comment type="function">
    <text evidence="1">Catalyzes the phosphorylation of D-fructose 6-phosphate to fructose 1,6-bisphosphate by ATP, the first committing step of glycolysis.</text>
</comment>
<comment type="catalytic activity">
    <reaction evidence="1">
        <text>beta-D-fructose 6-phosphate + ATP = beta-D-fructose 1,6-bisphosphate + ADP + H(+)</text>
        <dbReference type="Rhea" id="RHEA:16109"/>
        <dbReference type="ChEBI" id="CHEBI:15378"/>
        <dbReference type="ChEBI" id="CHEBI:30616"/>
        <dbReference type="ChEBI" id="CHEBI:32966"/>
        <dbReference type="ChEBI" id="CHEBI:57634"/>
        <dbReference type="ChEBI" id="CHEBI:456216"/>
        <dbReference type="EC" id="2.7.1.11"/>
    </reaction>
</comment>
<comment type="cofactor">
    <cofactor evidence="1">
        <name>Mg(2+)</name>
        <dbReference type="ChEBI" id="CHEBI:18420"/>
    </cofactor>
</comment>
<comment type="activity regulation">
    <text evidence="1">Allosterically activated by ADP, AMP, or fructose 2,6-bisphosphate, and allosterically inhibited by ATP or citrate.</text>
</comment>
<comment type="pathway">
    <text evidence="1">Carbohydrate degradation; glycolysis; D-glyceraldehyde 3-phosphate and glycerone phosphate from D-glucose: step 3/4.</text>
</comment>
<comment type="subunit">
    <text evidence="1">Homotetramer.</text>
</comment>
<comment type="subcellular location">
    <subcellularLocation>
        <location evidence="1">Cytoplasm</location>
    </subcellularLocation>
</comment>
<comment type="similarity">
    <text evidence="1">Belongs to the phosphofructokinase type A (PFKA) family. ATP-dependent PFK group I subfamily. Eukaryotic two domain clade 'E' sub-subfamily.</text>
</comment>
<sequence length="775" mass="84727">MTNTILDTYSSRRKPRRIGILTSGGDAPGMNGAIRAVVRTAIQNGCEAWAIHEGYEGLIQGGAMMHPLYWEDVRGFLSRGGTLIGSVRCDRFREREGRLQAARNMVLFGIDALVVCGGDGSLTGADLFRSEWPELLNELVSTGVLTVAQVAPHQNLNIVGLLGSIDNDFSGTDATIGCYSALTRICEAVDAVFDTASSHRRGFVVEVMGRHCGWLALMAAIATGADWLFIPERPPRDGWEDDMCSIITKNRNRGKRRTIVILAEGAQDSNLDRISSSAVKDVLSKRLGLDTRVTVLGHIQRGGSPCAYDRWLSTLQGIHAVKAVLSMTPESPSPVVIIQENRIRTSSLAETVALTKEANASMHAKEFEKAATLRDPEFMEYHSAYRHLNTSDHPKMVLPEDKRMRVAIIHVGAPAAGMNPATRAVVAYCLTRGHTPIAIHNGFPGLCRHHDDTPGSVREMHWLESGDWINDGGSDIGTNAGLPLDDIETTAQCFERYKFDALFVIGGFEAFTAVSQLRKARKQYLAFRIPLVLLPASMSNNVPGTEYSLGSDTSLNTLVYFCDVVRQSASSSGHSVFVVEAQGAEYQATAAALAAGAMTVYTPERGITLQSLSNDIEYLRQQFSKDHGANRSGKLIIRNDQTSTIYSTTEIANIIKHEAKNRFDAQGVVPGHFQQGGKVSPIDRIRAFRLAVKCMEHLETFAGQSPEEIMNDENSATVISIKQSRILLLPMGGPTGVEATDTDWKRQRPKTQNWLEIQEAVDSLSGRSSLYAIPN</sequence>
<gene>
    <name type="primary">pfkB</name>
    <name type="ORF">AO090010000444</name>
</gene>
<protein>
    <recommendedName>
        <fullName evidence="1">ATP-dependent 6-phosphofructokinase 2</fullName>
        <shortName evidence="1">ATP-PFK 2</shortName>
        <shortName evidence="1">Phosphofructokinase 2</shortName>
        <ecNumber evidence="1">2.7.1.11</ecNumber>
    </recommendedName>
    <alternativeName>
        <fullName evidence="1">Phosphohexokinase 2</fullName>
    </alternativeName>
</protein>
<reference key="1">
    <citation type="submission" date="1999-09" db="EMBL/GenBank/DDBJ databases">
        <title>Molecular cloning and characterization of glycolytic gene from Aspergillus oryzae.</title>
        <authorList>
            <person name="Nakajima K."/>
            <person name="Kunihiro S."/>
            <person name="Sano M."/>
            <person name="Eto S."/>
            <person name="Machida M."/>
        </authorList>
    </citation>
    <scope>NUCLEOTIDE SEQUENCE [MRNA]</scope>
    <source>
        <strain>ATCC 42149 / RIB 40</strain>
    </source>
</reference>
<reference key="2">
    <citation type="journal article" date="2005" name="Nature">
        <title>Genome sequencing and analysis of Aspergillus oryzae.</title>
        <authorList>
            <person name="Machida M."/>
            <person name="Asai K."/>
            <person name="Sano M."/>
            <person name="Tanaka T."/>
            <person name="Kumagai T."/>
            <person name="Terai G."/>
            <person name="Kusumoto K."/>
            <person name="Arima T."/>
            <person name="Akita O."/>
            <person name="Kashiwagi Y."/>
            <person name="Abe K."/>
            <person name="Gomi K."/>
            <person name="Horiuchi H."/>
            <person name="Kitamoto K."/>
            <person name="Kobayashi T."/>
            <person name="Takeuchi M."/>
            <person name="Denning D.W."/>
            <person name="Galagan J.E."/>
            <person name="Nierman W.C."/>
            <person name="Yu J."/>
            <person name="Archer D.B."/>
            <person name="Bennett J.W."/>
            <person name="Bhatnagar D."/>
            <person name="Cleveland T.E."/>
            <person name="Fedorova N.D."/>
            <person name="Gotoh O."/>
            <person name="Horikawa H."/>
            <person name="Hosoyama A."/>
            <person name="Ichinomiya M."/>
            <person name="Igarashi R."/>
            <person name="Iwashita K."/>
            <person name="Juvvadi P.R."/>
            <person name="Kato M."/>
            <person name="Kato Y."/>
            <person name="Kin T."/>
            <person name="Kokubun A."/>
            <person name="Maeda H."/>
            <person name="Maeyama N."/>
            <person name="Maruyama J."/>
            <person name="Nagasaki H."/>
            <person name="Nakajima T."/>
            <person name="Oda K."/>
            <person name="Okada K."/>
            <person name="Paulsen I."/>
            <person name="Sakamoto K."/>
            <person name="Sawano T."/>
            <person name="Takahashi M."/>
            <person name="Takase K."/>
            <person name="Terabayashi Y."/>
            <person name="Wortman J.R."/>
            <person name="Yamada O."/>
            <person name="Yamagata Y."/>
            <person name="Anazawa H."/>
            <person name="Hata Y."/>
            <person name="Koide Y."/>
            <person name="Komori T."/>
            <person name="Koyama Y."/>
            <person name="Minetoki T."/>
            <person name="Suharnan S."/>
            <person name="Tanaka A."/>
            <person name="Isono K."/>
            <person name="Kuhara S."/>
            <person name="Ogasawara N."/>
            <person name="Kikuchi H."/>
        </authorList>
    </citation>
    <scope>NUCLEOTIDE SEQUENCE [LARGE SCALE GENOMIC DNA]</scope>
    <source>
        <strain>ATCC 42149 / RIB 40</strain>
    </source>
</reference>
<evidence type="ECO:0000255" key="1">
    <source>
        <dbReference type="HAMAP-Rule" id="MF_03184"/>
    </source>
</evidence>
<proteinExistence type="evidence at transcript level"/>
<organism>
    <name type="scientific">Aspergillus oryzae (strain ATCC 42149 / RIB 40)</name>
    <name type="common">Yellow koji mold</name>
    <dbReference type="NCBI Taxonomy" id="510516"/>
    <lineage>
        <taxon>Eukaryota</taxon>
        <taxon>Fungi</taxon>
        <taxon>Dikarya</taxon>
        <taxon>Ascomycota</taxon>
        <taxon>Pezizomycotina</taxon>
        <taxon>Eurotiomycetes</taxon>
        <taxon>Eurotiomycetidae</taxon>
        <taxon>Eurotiales</taxon>
        <taxon>Aspergillaceae</taxon>
        <taxon>Aspergillus</taxon>
        <taxon>Aspergillus subgen. Circumdati</taxon>
    </lineage>
</organism>
<name>PFKA2_ASPOR</name>
<keyword id="KW-0021">Allosteric enzyme</keyword>
<keyword id="KW-0067">ATP-binding</keyword>
<keyword id="KW-0963">Cytoplasm</keyword>
<keyword id="KW-0324">Glycolysis</keyword>
<keyword id="KW-0418">Kinase</keyword>
<keyword id="KW-0460">Magnesium</keyword>
<keyword id="KW-0479">Metal-binding</keyword>
<keyword id="KW-0547">Nucleotide-binding</keyword>
<keyword id="KW-1185">Reference proteome</keyword>
<keyword id="KW-0808">Transferase</keyword>
<dbReference type="EC" id="2.7.1.11" evidence="1"/>
<dbReference type="EMBL" id="AB032271">
    <property type="protein sequence ID" value="BAB12231.1"/>
    <property type="molecule type" value="mRNA"/>
</dbReference>
<dbReference type="EMBL" id="BA000056">
    <property type="protein sequence ID" value="BAE66301.1"/>
    <property type="molecule type" value="Genomic_DNA"/>
</dbReference>
<dbReference type="RefSeq" id="XP_001827434.1">
    <property type="nucleotide sequence ID" value="XM_001827382.2"/>
</dbReference>
<dbReference type="SMR" id="Q9HGZ0"/>
<dbReference type="STRING" id="510516.Q9HGZ0"/>
<dbReference type="EnsemblFungi" id="BAE66301">
    <property type="protein sequence ID" value="BAE66301"/>
    <property type="gene ID" value="AO090010000444"/>
</dbReference>
<dbReference type="GeneID" id="5999568"/>
<dbReference type="KEGG" id="aor:AO090010000444"/>
<dbReference type="VEuPathDB" id="FungiDB:AO090010000444"/>
<dbReference type="HOGENOM" id="CLU_011053_0_0_1"/>
<dbReference type="OMA" id="WHNLGGS"/>
<dbReference type="OrthoDB" id="65999at5052"/>
<dbReference type="UniPathway" id="UPA00109">
    <property type="reaction ID" value="UER00182"/>
</dbReference>
<dbReference type="Proteomes" id="UP000006564">
    <property type="component" value="Chromosome 8"/>
</dbReference>
<dbReference type="GO" id="GO:0005945">
    <property type="term" value="C:6-phosphofructokinase complex"/>
    <property type="evidence" value="ECO:0007669"/>
    <property type="project" value="TreeGrafter"/>
</dbReference>
<dbReference type="GO" id="GO:0005739">
    <property type="term" value="C:mitochondrion"/>
    <property type="evidence" value="ECO:0007669"/>
    <property type="project" value="TreeGrafter"/>
</dbReference>
<dbReference type="GO" id="GO:0003872">
    <property type="term" value="F:6-phosphofructokinase activity"/>
    <property type="evidence" value="ECO:0007669"/>
    <property type="project" value="UniProtKB-UniRule"/>
</dbReference>
<dbReference type="GO" id="GO:0016208">
    <property type="term" value="F:AMP binding"/>
    <property type="evidence" value="ECO:0007669"/>
    <property type="project" value="TreeGrafter"/>
</dbReference>
<dbReference type="GO" id="GO:0005524">
    <property type="term" value="F:ATP binding"/>
    <property type="evidence" value="ECO:0007669"/>
    <property type="project" value="UniProtKB-KW"/>
</dbReference>
<dbReference type="GO" id="GO:0070095">
    <property type="term" value="F:fructose-6-phosphate binding"/>
    <property type="evidence" value="ECO:0007669"/>
    <property type="project" value="TreeGrafter"/>
</dbReference>
<dbReference type="GO" id="GO:0042802">
    <property type="term" value="F:identical protein binding"/>
    <property type="evidence" value="ECO:0007669"/>
    <property type="project" value="TreeGrafter"/>
</dbReference>
<dbReference type="GO" id="GO:0046872">
    <property type="term" value="F:metal ion binding"/>
    <property type="evidence" value="ECO:0007669"/>
    <property type="project" value="UniProtKB-KW"/>
</dbReference>
<dbReference type="GO" id="GO:0048029">
    <property type="term" value="F:monosaccharide binding"/>
    <property type="evidence" value="ECO:0007669"/>
    <property type="project" value="TreeGrafter"/>
</dbReference>
<dbReference type="GO" id="GO:0061621">
    <property type="term" value="P:canonical glycolysis"/>
    <property type="evidence" value="ECO:0007669"/>
    <property type="project" value="TreeGrafter"/>
</dbReference>
<dbReference type="GO" id="GO:0030388">
    <property type="term" value="P:fructose 1,6-bisphosphate metabolic process"/>
    <property type="evidence" value="ECO:0007669"/>
    <property type="project" value="TreeGrafter"/>
</dbReference>
<dbReference type="GO" id="GO:0006002">
    <property type="term" value="P:fructose 6-phosphate metabolic process"/>
    <property type="evidence" value="ECO:0007669"/>
    <property type="project" value="InterPro"/>
</dbReference>
<dbReference type="FunFam" id="3.40.50.460:FF:000007">
    <property type="entry name" value="ATP-dependent 6-phosphofructokinase"/>
    <property type="match status" value="1"/>
</dbReference>
<dbReference type="FunFam" id="3.40.50.460:FF:000008">
    <property type="entry name" value="ATP-dependent 6-phosphofructokinase"/>
    <property type="match status" value="1"/>
</dbReference>
<dbReference type="Gene3D" id="3.40.50.450">
    <property type="match status" value="2"/>
</dbReference>
<dbReference type="Gene3D" id="3.40.50.460">
    <property type="entry name" value="Phosphofructokinase domain"/>
    <property type="match status" value="2"/>
</dbReference>
<dbReference type="HAMAP" id="MF_03184">
    <property type="entry name" value="Phosphofructokinase_I_E"/>
    <property type="match status" value="1"/>
</dbReference>
<dbReference type="InterPro" id="IPR009161">
    <property type="entry name" value="6-Pfructokinase_euk"/>
</dbReference>
<dbReference type="InterPro" id="IPR022953">
    <property type="entry name" value="ATP_PFK"/>
</dbReference>
<dbReference type="InterPro" id="IPR015912">
    <property type="entry name" value="Phosphofructokinase_CS"/>
</dbReference>
<dbReference type="InterPro" id="IPR000023">
    <property type="entry name" value="Phosphofructokinase_dom"/>
</dbReference>
<dbReference type="InterPro" id="IPR035966">
    <property type="entry name" value="PKF_sf"/>
</dbReference>
<dbReference type="NCBIfam" id="TIGR02478">
    <property type="entry name" value="6PF1K_euk"/>
    <property type="match status" value="1"/>
</dbReference>
<dbReference type="PANTHER" id="PTHR13697:SF4">
    <property type="entry name" value="ATP-DEPENDENT 6-PHOSPHOFRUCTOKINASE"/>
    <property type="match status" value="1"/>
</dbReference>
<dbReference type="PANTHER" id="PTHR13697">
    <property type="entry name" value="PHOSPHOFRUCTOKINASE"/>
    <property type="match status" value="1"/>
</dbReference>
<dbReference type="Pfam" id="PF00365">
    <property type="entry name" value="PFK"/>
    <property type="match status" value="2"/>
</dbReference>
<dbReference type="PIRSF" id="PIRSF000533">
    <property type="entry name" value="ATP_PFK_euk"/>
    <property type="match status" value="1"/>
</dbReference>
<dbReference type="PRINTS" id="PR00476">
    <property type="entry name" value="PHFRCTKINASE"/>
</dbReference>
<dbReference type="SUPFAM" id="SSF53784">
    <property type="entry name" value="Phosphofructokinase"/>
    <property type="match status" value="2"/>
</dbReference>
<dbReference type="PROSITE" id="PS00433">
    <property type="entry name" value="PHOSPHOFRUCTOKINASE"/>
    <property type="match status" value="1"/>
</dbReference>
<accession>Q9HGZ0</accession>
<accession>Q2TWS2</accession>